<evidence type="ECO:0000250" key="1">
    <source>
        <dbReference type="UniProtKB" id="Q9EQL9"/>
    </source>
</evidence>
<evidence type="ECO:0000255" key="2">
    <source>
        <dbReference type="PROSITE-ProRule" id="PRU00322"/>
    </source>
</evidence>
<evidence type="ECO:0000256" key="3">
    <source>
        <dbReference type="SAM" id="MobiDB-lite"/>
    </source>
</evidence>
<evidence type="ECO:0000269" key="4">
    <source>
    </source>
</evidence>
<evidence type="ECO:0000269" key="5">
    <source>
    </source>
</evidence>
<evidence type="ECO:0000269" key="6">
    <source>
    </source>
</evidence>
<evidence type="ECO:0000269" key="7">
    <source>
    </source>
</evidence>
<evidence type="ECO:0000269" key="8">
    <source>
    </source>
</evidence>
<evidence type="ECO:0000269" key="9">
    <source>
    </source>
</evidence>
<evidence type="ECO:0000269" key="10">
    <source>
    </source>
</evidence>
<evidence type="ECO:0000269" key="11">
    <source>
    </source>
</evidence>
<evidence type="ECO:0000303" key="12">
    <source>
    </source>
</evidence>
<evidence type="ECO:0000303" key="13">
    <source>
    </source>
</evidence>
<evidence type="ECO:0000303" key="14">
    <source>
    </source>
</evidence>
<evidence type="ECO:0000305" key="15"/>
<evidence type="ECO:0007744" key="16">
    <source>
    </source>
</evidence>
<evidence type="ECO:0007744" key="17">
    <source>
    </source>
</evidence>
<evidence type="ECO:0007744" key="18">
    <source>
    </source>
</evidence>
<evidence type="ECO:0007829" key="19">
    <source>
        <dbReference type="PDB" id="4EMO"/>
    </source>
</evidence>
<evidence type="ECO:0007829" key="20">
    <source>
        <dbReference type="PDB" id="5X0W"/>
    </source>
</evidence>
<proteinExistence type="evidence at protein level"/>
<feature type="chain" id="PRO_0000280634" description="Sharpin">
    <location>
        <begin position="1"/>
        <end position="387"/>
    </location>
</feature>
<feature type="domain" description="Ubiquitin-like">
    <location>
        <begin position="219"/>
        <end position="288"/>
    </location>
</feature>
<feature type="zinc finger region" description="RanBP2-type" evidence="2">
    <location>
        <begin position="348"/>
        <end position="377"/>
    </location>
</feature>
<feature type="region of interest" description="Self-association" evidence="1">
    <location>
        <begin position="1"/>
        <end position="180"/>
    </location>
</feature>
<feature type="region of interest" description="Disordered" evidence="3">
    <location>
        <begin position="122"/>
        <end position="169"/>
    </location>
</feature>
<feature type="region of interest" description="Interaction with SHANK1" evidence="1">
    <location>
        <begin position="175"/>
        <end position="310"/>
    </location>
</feature>
<feature type="region of interest" description="Disordered" evidence="3">
    <location>
        <begin position="305"/>
        <end position="349"/>
    </location>
</feature>
<feature type="compositionally biased region" description="Polar residues" evidence="3">
    <location>
        <begin position="122"/>
        <end position="132"/>
    </location>
</feature>
<feature type="compositionally biased region" description="Low complexity" evidence="3">
    <location>
        <begin position="339"/>
        <end position="349"/>
    </location>
</feature>
<feature type="modified residue" description="Phosphoserine" evidence="16 18">
    <location>
        <position position="165"/>
    </location>
</feature>
<feature type="modified residue" description="Phosphoserine" evidence="17 18">
    <location>
        <position position="312"/>
    </location>
</feature>
<feature type="splice variant" id="VSP_023837" description="In isoform 2." evidence="12 13">
    <original>TGPSPQHPQKMDGELGRL</original>
    <variation>QLVLSFLHLHQCPRPPWL</variation>
    <location>
        <begin position="309"/>
        <end position="326"/>
    </location>
</feature>
<feature type="splice variant" id="VSP_023838" description="In isoform 2." evidence="12 13">
    <location>
        <begin position="327"/>
        <end position="387"/>
    </location>
</feature>
<feature type="sequence variant" id="VAR_047799" description="In dbSNP:rs11541804.">
    <original>S</original>
    <variation>T</variation>
    <location>
        <position position="282"/>
    </location>
</feature>
<feature type="sequence variant" id="VAR_047800" description="In dbSNP:rs34674752.">
    <original>P</original>
    <variation>S</variation>
    <location>
        <position position="294"/>
    </location>
</feature>
<feature type="sequence variant" id="VAR_047801" description="In dbSNP:rs35844464.">
    <original>P</original>
    <variation>R</variation>
    <location>
        <position position="311"/>
    </location>
</feature>
<feature type="mutagenesis site" description="Abolishes homodimerization." evidence="8">
    <original>V</original>
    <variation>D</variation>
    <location>
        <position position="114"/>
    </location>
</feature>
<feature type="mutagenesis site" description="Abolishes interaction with RNF31 and ability to mediate linear polyubiquitination." evidence="7">
    <original>I</original>
    <variation>A</variation>
    <location>
        <position position="272"/>
    </location>
</feature>
<feature type="mutagenesis site" description="Abolishes binding to ubiquitin without affecting interaction with RNF31; when associated with S-357." evidence="5">
    <original>C</original>
    <variation>S</variation>
    <location>
        <position position="354"/>
    </location>
</feature>
<feature type="mutagenesis site" description="Abolishes binding to ubiquitin without affecting interaction with RNF31; when associated with S-354." evidence="5">
    <original>C</original>
    <variation>S</variation>
    <location>
        <position position="357"/>
    </location>
</feature>
<feature type="mutagenesis site" description="Abolishes binding to ubiquitin and ability to mediate linear polyubiquitination." evidence="7">
    <original>TF</original>
    <variation>LV</variation>
    <location>
        <begin position="358"/>
        <end position="359"/>
    </location>
</feature>
<feature type="mutagenesis site" description="Abolishes binding to ubiquitin without affecting interaction with RNF31; when associated with S-371." evidence="5">
    <original>C</original>
    <variation>S</variation>
    <location>
        <position position="368"/>
    </location>
</feature>
<feature type="mutagenesis site" description="Abolishes binding to ubiquitin without affecting interaction with RNF31; when associated with S-368." evidence="5">
    <original>C</original>
    <variation>S</variation>
    <location>
        <position position="371"/>
    </location>
</feature>
<feature type="sequence conflict" description="In Ref. 6; AAH02688." evidence="15" ref="6">
    <original>A</original>
    <variation>P</variation>
    <location>
        <position position="238"/>
    </location>
</feature>
<feature type="sequence conflict" description="In Ref. 3; BAC11666." evidence="15" ref="3">
    <original>Q</original>
    <variation>R</variation>
    <location>
        <position position="243"/>
    </location>
</feature>
<feature type="sequence conflict" description="In Ref. 6; AAH02688." evidence="15" ref="6">
    <original>V</original>
    <variation>A</variation>
    <location>
        <position position="257"/>
    </location>
</feature>
<feature type="turn" evidence="19">
    <location>
        <begin position="3"/>
        <end position="5"/>
    </location>
</feature>
<feature type="strand" evidence="19">
    <location>
        <begin position="7"/>
        <end position="11"/>
    </location>
</feature>
<feature type="helix" evidence="19">
    <location>
        <begin position="12"/>
        <end position="15"/>
    </location>
</feature>
<feature type="strand" evidence="19">
    <location>
        <begin position="20"/>
        <end position="30"/>
    </location>
</feature>
<feature type="helix" evidence="19">
    <location>
        <begin position="31"/>
        <end position="33"/>
    </location>
</feature>
<feature type="strand" evidence="19">
    <location>
        <begin position="40"/>
        <end position="48"/>
    </location>
</feature>
<feature type="strand" evidence="19">
    <location>
        <begin position="56"/>
        <end position="60"/>
    </location>
</feature>
<feature type="strand" evidence="19">
    <location>
        <begin position="70"/>
        <end position="73"/>
    </location>
</feature>
<feature type="helix" evidence="19">
    <location>
        <begin position="74"/>
        <end position="76"/>
    </location>
</feature>
<feature type="strand" evidence="19">
    <location>
        <begin position="77"/>
        <end position="83"/>
    </location>
</feature>
<feature type="strand" evidence="19">
    <location>
        <begin position="86"/>
        <end position="90"/>
    </location>
</feature>
<feature type="strand" evidence="19">
    <location>
        <begin position="99"/>
        <end position="105"/>
    </location>
</feature>
<feature type="helix" evidence="19">
    <location>
        <begin position="106"/>
        <end position="119"/>
    </location>
</feature>
<feature type="strand" evidence="20">
    <location>
        <begin position="219"/>
        <end position="226"/>
    </location>
</feature>
<feature type="strand" evidence="20">
    <location>
        <begin position="239"/>
        <end position="244"/>
    </location>
</feature>
<feature type="helix" evidence="20">
    <location>
        <begin position="250"/>
        <end position="261"/>
    </location>
</feature>
<feature type="helix" evidence="20">
    <location>
        <begin position="265"/>
        <end position="267"/>
    </location>
</feature>
<feature type="strand" evidence="20">
    <location>
        <begin position="268"/>
        <end position="271"/>
    </location>
</feature>
<feature type="helix" evidence="20">
    <location>
        <begin position="283"/>
        <end position="285"/>
    </location>
</feature>
<feature type="strand" evidence="20">
    <location>
        <begin position="293"/>
        <end position="299"/>
    </location>
</feature>
<dbReference type="EMBL" id="AB052764">
    <property type="protein sequence ID" value="BAC53797.1"/>
    <property type="status" value="ALT_FRAME"/>
    <property type="molecule type" value="mRNA"/>
</dbReference>
<dbReference type="EMBL" id="AB052765">
    <property type="protein sequence ID" value="BAC53798.1"/>
    <property type="status" value="ALT_SEQ"/>
    <property type="molecule type" value="mRNA"/>
</dbReference>
<dbReference type="EMBL" id="FJ655995">
    <property type="protein sequence ID" value="ACN38058.1"/>
    <property type="molecule type" value="mRNA"/>
</dbReference>
<dbReference type="EMBL" id="AL136816">
    <property type="protein sequence ID" value="CAB66750.1"/>
    <property type="molecule type" value="mRNA"/>
</dbReference>
<dbReference type="EMBL" id="AK075518">
    <property type="protein sequence ID" value="BAC11666.1"/>
    <property type="status" value="ALT_FRAME"/>
    <property type="molecule type" value="mRNA"/>
</dbReference>
<dbReference type="EMBL" id="AC104592">
    <property type="status" value="NOT_ANNOTATED_CDS"/>
    <property type="molecule type" value="Genomic_DNA"/>
</dbReference>
<dbReference type="EMBL" id="CH471162">
    <property type="protein sequence ID" value="EAW82152.1"/>
    <property type="molecule type" value="Genomic_DNA"/>
</dbReference>
<dbReference type="EMBL" id="CH471162">
    <property type="protein sequence ID" value="EAW82153.1"/>
    <property type="molecule type" value="Genomic_DNA"/>
</dbReference>
<dbReference type="EMBL" id="CH471162">
    <property type="protein sequence ID" value="EAW82150.1"/>
    <property type="molecule type" value="Genomic_DNA"/>
</dbReference>
<dbReference type="EMBL" id="CH471162">
    <property type="protein sequence ID" value="EAW82151.1"/>
    <property type="molecule type" value="Genomic_DNA"/>
</dbReference>
<dbReference type="EMBL" id="BC002688">
    <property type="protein sequence ID" value="AAH02688.2"/>
    <property type="molecule type" value="mRNA"/>
</dbReference>
<dbReference type="EMBL" id="BC025244">
    <property type="protein sequence ID" value="AAH25244.1"/>
    <property type="molecule type" value="mRNA"/>
</dbReference>
<dbReference type="EMBL" id="BC034028">
    <property type="protein sequence ID" value="AAH34028.1"/>
    <property type="molecule type" value="mRNA"/>
</dbReference>
<dbReference type="CCDS" id="CCDS43777.1">
    <molecule id="Q9H0F6-1"/>
</dbReference>
<dbReference type="RefSeq" id="NP_112236.3">
    <molecule id="Q9H0F6-1"/>
    <property type="nucleotide sequence ID" value="NM_030974.3"/>
</dbReference>
<dbReference type="RefSeq" id="XP_016869377.1">
    <molecule id="Q9H0F6-2"/>
    <property type="nucleotide sequence ID" value="XM_017013888.3"/>
</dbReference>
<dbReference type="RefSeq" id="XP_047278245.1">
    <molecule id="Q9H0F6-1"/>
    <property type="nucleotide sequence ID" value="XM_047422289.1"/>
</dbReference>
<dbReference type="RefSeq" id="XP_054217295.1">
    <molecule id="Q9H0F6-1"/>
    <property type="nucleotide sequence ID" value="XM_054361320.1"/>
</dbReference>
<dbReference type="RefSeq" id="XP_054217297.1">
    <molecule id="Q9H0F6-2"/>
    <property type="nucleotide sequence ID" value="XM_054361322.1"/>
</dbReference>
<dbReference type="PDB" id="4EMO">
    <property type="method" value="X-ray"/>
    <property type="resolution" value="2.00 A"/>
    <property type="chains" value="A/B/C/D=1-127"/>
</dbReference>
<dbReference type="PDB" id="5X0W">
    <property type="method" value="X-ray"/>
    <property type="resolution" value="3.00 A"/>
    <property type="chains" value="B/D/F/H=206-309"/>
</dbReference>
<dbReference type="PDB" id="8K6P">
    <property type="method" value="X-ray"/>
    <property type="resolution" value="1.86 A"/>
    <property type="chains" value="A/B/C=164-210"/>
</dbReference>
<dbReference type="PDBsum" id="4EMO"/>
<dbReference type="PDBsum" id="5X0W"/>
<dbReference type="PDBsum" id="8K6P"/>
<dbReference type="EMDB" id="EMD-11054"/>
<dbReference type="SMR" id="Q9H0F6"/>
<dbReference type="BioGRID" id="123608">
    <property type="interactions" value="187"/>
</dbReference>
<dbReference type="ComplexPortal" id="CPX-1877">
    <property type="entry name" value="LUBAC ubiquitin ligase complex"/>
</dbReference>
<dbReference type="CORUM" id="Q9H0F6"/>
<dbReference type="DIP" id="DIP-57842N"/>
<dbReference type="FunCoup" id="Q9H0F6">
    <property type="interactions" value="641"/>
</dbReference>
<dbReference type="IntAct" id="Q9H0F6">
    <property type="interactions" value="110"/>
</dbReference>
<dbReference type="MINT" id="Q9H0F6"/>
<dbReference type="STRING" id="9606.ENSP00000381698"/>
<dbReference type="BindingDB" id="Q9H0F6"/>
<dbReference type="ChEMBL" id="CHEMBL4296109"/>
<dbReference type="iPTMnet" id="Q9H0F6"/>
<dbReference type="PhosphoSitePlus" id="Q9H0F6"/>
<dbReference type="BioMuta" id="SHARPIN"/>
<dbReference type="DMDM" id="74733523"/>
<dbReference type="jPOST" id="Q9H0F6"/>
<dbReference type="MassIVE" id="Q9H0F6"/>
<dbReference type="PaxDb" id="9606-ENSP00000381698"/>
<dbReference type="PeptideAtlas" id="Q9H0F6"/>
<dbReference type="ProteomicsDB" id="80272">
    <molecule id="Q9H0F6-1"/>
</dbReference>
<dbReference type="ProteomicsDB" id="80273">
    <molecule id="Q9H0F6-2"/>
</dbReference>
<dbReference type="Pumba" id="Q9H0F6"/>
<dbReference type="Antibodypedia" id="7700">
    <property type="antibodies" value="267 antibodies from 30 providers"/>
</dbReference>
<dbReference type="DNASU" id="81858"/>
<dbReference type="Ensembl" id="ENST00000359551.6">
    <molecule id="Q9H0F6-2"/>
    <property type="protein sequence ID" value="ENSP00000352551.6"/>
    <property type="gene ID" value="ENSG00000179526.17"/>
</dbReference>
<dbReference type="Ensembl" id="ENST00000398712.7">
    <molecule id="Q9H0F6-1"/>
    <property type="protein sequence ID" value="ENSP00000381698.2"/>
    <property type="gene ID" value="ENSG00000179526.17"/>
</dbReference>
<dbReference type="GeneID" id="81858"/>
<dbReference type="KEGG" id="hsa:81858"/>
<dbReference type="MANE-Select" id="ENST00000398712.7">
    <property type="protein sequence ID" value="ENSP00000381698.2"/>
    <property type="RefSeq nucleotide sequence ID" value="NM_030974.4"/>
    <property type="RefSeq protein sequence ID" value="NP_112236.3"/>
</dbReference>
<dbReference type="UCSC" id="uc003zba.4">
    <molecule id="Q9H0F6-1"/>
    <property type="organism name" value="human"/>
</dbReference>
<dbReference type="AGR" id="HGNC:25321"/>
<dbReference type="CTD" id="81858"/>
<dbReference type="DisGeNET" id="81858"/>
<dbReference type="GeneCards" id="SHARPIN"/>
<dbReference type="HGNC" id="HGNC:25321">
    <property type="gene designation" value="SHARPIN"/>
</dbReference>
<dbReference type="HPA" id="ENSG00000179526">
    <property type="expression patterns" value="Low tissue specificity"/>
</dbReference>
<dbReference type="MalaCards" id="SHARPIN"/>
<dbReference type="MIM" id="611885">
    <property type="type" value="gene"/>
</dbReference>
<dbReference type="MIM" id="620795">
    <property type="type" value="phenotype"/>
</dbReference>
<dbReference type="neXtProt" id="NX_Q9H0F6"/>
<dbReference type="NIAGADS" id="ENSG00000179526"/>
<dbReference type="OpenTargets" id="ENSG00000179526"/>
<dbReference type="PharmGKB" id="PA142670925"/>
<dbReference type="VEuPathDB" id="HostDB:ENSG00000179526"/>
<dbReference type="eggNOG" id="KOG1815">
    <property type="taxonomic scope" value="Eukaryota"/>
</dbReference>
<dbReference type="GeneTree" id="ENSGT00940000161574"/>
<dbReference type="HOGENOM" id="CLU_014998_0_1_1"/>
<dbReference type="InParanoid" id="Q9H0F6"/>
<dbReference type="OMA" id="CIQQEKG"/>
<dbReference type="OrthoDB" id="261960at2759"/>
<dbReference type="PAN-GO" id="Q9H0F6">
    <property type="GO annotations" value="6 GO annotations based on evolutionary models"/>
</dbReference>
<dbReference type="PhylomeDB" id="Q9H0F6"/>
<dbReference type="TreeFam" id="TF323486"/>
<dbReference type="PathwayCommons" id="Q9H0F6"/>
<dbReference type="Reactome" id="R-HSA-5357786">
    <property type="pathway name" value="TNFR1-induced proapoptotic signaling"/>
</dbReference>
<dbReference type="Reactome" id="R-HSA-5357905">
    <property type="pathway name" value="Regulation of TNFR1 signaling"/>
</dbReference>
<dbReference type="Reactome" id="R-HSA-5357956">
    <property type="pathway name" value="TNFR1-induced NF-kappa-B signaling pathway"/>
</dbReference>
<dbReference type="Reactome" id="R-HSA-6794361">
    <property type="pathway name" value="Neurexins and neuroligins"/>
</dbReference>
<dbReference type="SignaLink" id="Q9H0F6"/>
<dbReference type="UniPathway" id="UPA00143"/>
<dbReference type="BioGRID-ORCS" id="81858">
    <property type="hits" value="19 hits in 1159 CRISPR screens"/>
</dbReference>
<dbReference type="ChiTaRS" id="SHARPIN">
    <property type="organism name" value="human"/>
</dbReference>
<dbReference type="EvolutionaryTrace" id="Q9H0F6"/>
<dbReference type="GenomeRNAi" id="81858"/>
<dbReference type="Pharos" id="Q9H0F6">
    <property type="development level" value="Tbio"/>
</dbReference>
<dbReference type="PRO" id="PR:Q9H0F6"/>
<dbReference type="Proteomes" id="UP000005640">
    <property type="component" value="Chromosome 8"/>
</dbReference>
<dbReference type="RNAct" id="Q9H0F6">
    <property type="molecule type" value="protein"/>
</dbReference>
<dbReference type="Bgee" id="ENSG00000179526">
    <property type="expression patterns" value="Expressed in right testis and 174 other cell types or tissues"/>
</dbReference>
<dbReference type="ExpressionAtlas" id="Q9H0F6">
    <property type="expression patterns" value="baseline and differential"/>
</dbReference>
<dbReference type="GO" id="GO:0005829">
    <property type="term" value="C:cytosol"/>
    <property type="evidence" value="ECO:0000314"/>
    <property type="project" value="UniProtKB"/>
</dbReference>
<dbReference type="GO" id="GO:0071797">
    <property type="term" value="C:LUBAC complex"/>
    <property type="evidence" value="ECO:0000314"/>
    <property type="project" value="UniProtKB"/>
</dbReference>
<dbReference type="GO" id="GO:0045202">
    <property type="term" value="C:synapse"/>
    <property type="evidence" value="ECO:0007669"/>
    <property type="project" value="UniProtKB-SubCell"/>
</dbReference>
<dbReference type="GO" id="GO:0031593">
    <property type="term" value="F:polyubiquitin modification-dependent protein binding"/>
    <property type="evidence" value="ECO:0000314"/>
    <property type="project" value="UniProtKB"/>
</dbReference>
<dbReference type="GO" id="GO:0030674">
    <property type="term" value="F:protein-macromolecule adaptor activity"/>
    <property type="evidence" value="ECO:0007669"/>
    <property type="project" value="Ensembl"/>
</dbReference>
<dbReference type="GO" id="GO:0043130">
    <property type="term" value="F:ubiquitin binding"/>
    <property type="evidence" value="ECO:0000318"/>
    <property type="project" value="GO_Central"/>
</dbReference>
<dbReference type="GO" id="GO:0004842">
    <property type="term" value="F:ubiquitin-protein transferase activity"/>
    <property type="evidence" value="ECO:0000318"/>
    <property type="project" value="GO_Central"/>
</dbReference>
<dbReference type="GO" id="GO:0008270">
    <property type="term" value="F:zinc ion binding"/>
    <property type="evidence" value="ECO:0007669"/>
    <property type="project" value="UniProtKB-KW"/>
</dbReference>
<dbReference type="GO" id="GO:0030262">
    <property type="term" value="P:apoptotic nuclear changes"/>
    <property type="evidence" value="ECO:0007669"/>
    <property type="project" value="Ensembl"/>
</dbReference>
<dbReference type="GO" id="GO:0042742">
    <property type="term" value="P:defense response to bacterium"/>
    <property type="evidence" value="ECO:0000314"/>
    <property type="project" value="UniProtKB"/>
</dbReference>
<dbReference type="GO" id="GO:0031424">
    <property type="term" value="P:keratinization"/>
    <property type="evidence" value="ECO:0007669"/>
    <property type="project" value="Ensembl"/>
</dbReference>
<dbReference type="GO" id="GO:0007005">
    <property type="term" value="P:mitochondrion organization"/>
    <property type="evidence" value="ECO:0007669"/>
    <property type="project" value="Ensembl"/>
</dbReference>
<dbReference type="GO" id="GO:0050728">
    <property type="term" value="P:negative regulation of inflammatory response"/>
    <property type="evidence" value="ECO:0000250"/>
    <property type="project" value="UniProtKB"/>
</dbReference>
<dbReference type="GO" id="GO:0043123">
    <property type="term" value="P:positive regulation of canonical NF-kappaB signal transduction"/>
    <property type="evidence" value="ECO:0000314"/>
    <property type="project" value="UniProtKB"/>
</dbReference>
<dbReference type="GO" id="GO:0043161">
    <property type="term" value="P:proteasome-mediated ubiquitin-dependent protein catabolic process"/>
    <property type="evidence" value="ECO:0000318"/>
    <property type="project" value="GO_Central"/>
</dbReference>
<dbReference type="GO" id="GO:0097039">
    <property type="term" value="P:protein linear polyubiquitination"/>
    <property type="evidence" value="ECO:0000314"/>
    <property type="project" value="UniProtKB"/>
</dbReference>
<dbReference type="GO" id="GO:2000348">
    <property type="term" value="P:regulation of CD40 signaling pathway"/>
    <property type="evidence" value="ECO:0000314"/>
    <property type="project" value="UniProtKB"/>
</dbReference>
<dbReference type="GO" id="GO:0010803">
    <property type="term" value="P:regulation of tumor necrosis factor-mediated signaling pathway"/>
    <property type="evidence" value="ECO:0000314"/>
    <property type="project" value="UniProtKB"/>
</dbReference>
<dbReference type="CDD" id="cd13305">
    <property type="entry name" value="PH_SHARPIN"/>
    <property type="match status" value="1"/>
</dbReference>
<dbReference type="CDD" id="cd01799">
    <property type="entry name" value="Ubl_HOIL1"/>
    <property type="match status" value="1"/>
</dbReference>
<dbReference type="FunFam" id="3.10.20.90:FF:000130">
    <property type="entry name" value="SHANK-associated RH domain interactor"/>
    <property type="match status" value="1"/>
</dbReference>
<dbReference type="FunFam" id="2.30.29.30:FF:000331">
    <property type="entry name" value="sharpin isoform X1"/>
    <property type="match status" value="1"/>
</dbReference>
<dbReference type="FunFam" id="2.30.30.380:FF:000014">
    <property type="entry name" value="sharpin isoform X1"/>
    <property type="match status" value="1"/>
</dbReference>
<dbReference type="Gene3D" id="3.10.20.90">
    <property type="entry name" value="Phosphatidylinositol 3-kinase Catalytic Subunit, Chain A, domain 1"/>
    <property type="match status" value="1"/>
</dbReference>
<dbReference type="Gene3D" id="2.30.29.30">
    <property type="entry name" value="Pleckstrin-homology domain (PH domain)/Phosphotyrosine-binding domain (PTB)"/>
    <property type="match status" value="1"/>
</dbReference>
<dbReference type="Gene3D" id="2.30.30.380">
    <property type="entry name" value="Zn-finger domain of Sec23/24"/>
    <property type="match status" value="1"/>
</dbReference>
<dbReference type="InterPro" id="IPR051628">
    <property type="entry name" value="LUBAC_E3_Ligases"/>
</dbReference>
<dbReference type="InterPro" id="IPR011993">
    <property type="entry name" value="PH-like_dom_sf"/>
</dbReference>
<dbReference type="InterPro" id="IPR031912">
    <property type="entry name" value="Sharpin_PH"/>
</dbReference>
<dbReference type="InterPro" id="IPR029071">
    <property type="entry name" value="Ubiquitin-like_domsf"/>
</dbReference>
<dbReference type="InterPro" id="IPR001876">
    <property type="entry name" value="Znf_RanBP2"/>
</dbReference>
<dbReference type="InterPro" id="IPR036443">
    <property type="entry name" value="Znf_RanBP2_sf"/>
</dbReference>
<dbReference type="PANTHER" id="PTHR22770:SF43">
    <property type="entry name" value="SHARPIN"/>
    <property type="match status" value="1"/>
</dbReference>
<dbReference type="PANTHER" id="PTHR22770">
    <property type="entry name" value="UBIQUITIN CONJUGATING ENZYME 7 INTERACTING PROTEIN-RELATED"/>
    <property type="match status" value="1"/>
</dbReference>
<dbReference type="Pfam" id="PF25393">
    <property type="entry name" value="LTM"/>
    <property type="match status" value="1"/>
</dbReference>
<dbReference type="Pfam" id="PF16764">
    <property type="entry name" value="Sharpin_PH"/>
    <property type="match status" value="1"/>
</dbReference>
<dbReference type="SMART" id="SM00547">
    <property type="entry name" value="ZnF_RBZ"/>
    <property type="match status" value="1"/>
</dbReference>
<dbReference type="SUPFAM" id="SSF90209">
    <property type="entry name" value="Ran binding protein zinc finger-like"/>
    <property type="match status" value="1"/>
</dbReference>
<dbReference type="SUPFAM" id="SSF54236">
    <property type="entry name" value="Ubiquitin-like"/>
    <property type="match status" value="1"/>
</dbReference>
<dbReference type="PROSITE" id="PS01358">
    <property type="entry name" value="ZF_RANBP2_1"/>
    <property type="match status" value="1"/>
</dbReference>
<dbReference type="PROSITE" id="PS50199">
    <property type="entry name" value="ZF_RANBP2_2"/>
    <property type="match status" value="1"/>
</dbReference>
<keyword id="KW-0002">3D-structure</keyword>
<keyword id="KW-0025">Alternative splicing</keyword>
<keyword id="KW-0963">Cytoplasm</keyword>
<keyword id="KW-0479">Metal-binding</keyword>
<keyword id="KW-0597">Phosphoprotein</keyword>
<keyword id="KW-1267">Proteomics identification</keyword>
<keyword id="KW-1185">Reference proteome</keyword>
<keyword id="KW-0770">Synapse</keyword>
<keyword id="KW-0833">Ubl conjugation pathway</keyword>
<keyword id="KW-0862">Zinc</keyword>
<keyword id="KW-0863">Zinc-finger</keyword>
<comment type="function">
    <text evidence="5 6 7 9 10">Component of the LUBAC complex which conjugates linear polyubiquitin chains in a head-to-tail manner to substrates and plays a key role in NF-kappa-B activation and regulation of inflammation (PubMed:21455173, PubMed:21455180, PubMed:21455181). LUBAC conjugates linear polyubiquitin to IKBKG and RIPK1 and is involved in activation of the canonical NF-kappa-B and the JNK signaling pathways (PubMed:21455173, PubMed:21455180, PubMed:21455181). Linear ubiquitination mediated by the LUBAC complex interferes with TNF-induced cell death and thereby prevents inflammation (PubMed:21455173, PubMed:21455180, PubMed:21455181). LUBAC is recruited to the TNF-R1 signaling complex (TNF-RSC) following polyubiquitination of TNF-RSC components by BIRC2 and/or BIRC3 and to conjugate linear polyubiquitin to IKBKG and possibly other components contributing to the stability of the complex (PubMed:21455173, PubMed:21455180, PubMed:21455181). The LUBAC complex is also involved in innate immunity by conjugating linear polyubiquitin chains at the surface of bacteria invading the cytosol to form the ubiquitin coat surrounding bacteria (PubMed:28481331). LUBAC is not able to initiate formation of the bacterial ubiquitin coat, and can only promote formation of linear polyubiquitins on pre-existing ubiquitin (PubMed:28481331). The bacterial ubiquitin coat acts as an 'eat-me' signal for xenophagy and promotes NF-kappa-B activation (PubMed:28481331). Together with OTULIN, the LUBAC complex regulates the canonical Wnt signaling during angiogenesis (PubMed:23708998).</text>
</comment>
<comment type="pathway">
    <text evidence="10">Protein modification; protein ubiquitination.</text>
</comment>
<comment type="subunit">
    <text evidence="1 5 6 7 8 10">Monomer and homodimer (By similarity). Component of the LUBAC complex (linear ubiquitin chain assembly complex) which consists of SHARPIN, RBCK1 and RNF31 (PubMed:21455173, PubMed:21455180, PubMed:21455181, PubMed:22549881, PubMed:28481331). LUBAC has a MW of approximately 600 kDa suggesting a heteromultimeric assembly of its subunits (PubMed:21455173, PubMed:21455180, PubMed:21455181, PubMed:22549881). Associates with the TNF-R1 signaling complex (TNF-RSC) in a stimulation-dependent manner (PubMed:21455173, PubMed:21455180, PubMed:21455181, PubMed:22549881). Interacts with EYA1, EYA2, SHANK1 and SHANK3 (via ANK repeats) (By similarity).</text>
</comment>
<comment type="interaction">
    <interactant intactId="EBI-3942966">
        <id>Q9H0F6</id>
    </interactant>
    <interactant intactId="EBI-81279">
        <id>Q9Y6K9</id>
        <label>IKBKG</label>
    </interactant>
    <organismsDiffer>false</organismsDiffer>
    <experiments>14</experiments>
</comment>
<comment type="interaction">
    <interactant intactId="EBI-3942966">
        <id>Q9H0F6</id>
    </interactant>
    <interactant intactId="EBI-702960">
        <id>P17301</id>
        <label>ITGA2</label>
    </interactant>
    <organismsDiffer>false</organismsDiffer>
    <experiments>5</experiments>
</comment>
<comment type="interaction">
    <interactant intactId="EBI-3942966">
        <id>Q9H0F6</id>
    </interactant>
    <interactant intactId="EBI-1382311">
        <id>P08648</id>
        <label>ITGA5</label>
    </interactant>
    <organismsDiffer>false</organismsDiffer>
    <experiments>4</experiments>
</comment>
<comment type="interaction">
    <interactant intactId="EBI-3942966">
        <id>Q9H0F6</id>
    </interactant>
    <interactant intactId="EBI-1047372">
        <id>Q9UDY8</id>
        <label>MALT1</label>
    </interactant>
    <organismsDiffer>false</organismsDiffer>
    <experiments>2</experiments>
</comment>
<comment type="interaction">
    <interactant intactId="EBI-3942966">
        <id>Q9H0F6</id>
    </interactant>
    <interactant intactId="EBI-2340624">
        <id>Q9BYM8</id>
        <label>RBCK1</label>
    </interactant>
    <organismsDiffer>false</organismsDiffer>
    <experiments>28</experiments>
</comment>
<comment type="interaction">
    <interactant intactId="EBI-3942966">
        <id>Q9H0F6</id>
    </interactant>
    <interactant intactId="EBI-948111">
        <id>Q96EP0</id>
        <label>RNF31</label>
    </interactant>
    <organismsDiffer>false</organismsDiffer>
    <experiments>34</experiments>
</comment>
<comment type="interaction">
    <interactant intactId="EBI-9843813">
        <id>Q9H0F6-2</id>
    </interactant>
    <interactant intactId="EBI-11962084">
        <id>Q3LI66</id>
        <label>KRTAP6-2</label>
    </interactant>
    <organismsDiffer>false</organismsDiffer>
    <experiments>3</experiments>
</comment>
<comment type="interaction">
    <interactant intactId="EBI-9843813">
        <id>Q9H0F6-2</id>
    </interactant>
    <interactant intactId="EBI-18394498">
        <id>Q8IUC3</id>
        <label>KRTAP7-1</label>
    </interactant>
    <organismsDiffer>false</organismsDiffer>
    <experiments>3</experiments>
</comment>
<comment type="interaction">
    <interactant intactId="EBI-9843813">
        <id>Q9H0F6-2</id>
    </interactant>
    <interactant intactId="EBI-358993">
        <id>Q15645</id>
        <label>TRIP13</label>
    </interactant>
    <organismsDiffer>false</organismsDiffer>
    <experiments>3</experiments>
</comment>
<comment type="interaction">
    <interactant intactId="EBI-9843813">
        <id>Q9H0F6-2</id>
    </interactant>
    <interactant intactId="EBI-11975223">
        <id>Q70EL1-9</id>
        <label>USP54</label>
    </interactant>
    <organismsDiffer>false</organismsDiffer>
    <experiments>3</experiments>
</comment>
<comment type="interaction">
    <interactant intactId="EBI-9843813">
        <id>Q9H0F6-2</id>
    </interactant>
    <interactant intactId="EBI-10188476">
        <id>A0A0C4DGF1</id>
        <label>ZBTB32</label>
    </interactant>
    <organismsDiffer>false</organismsDiffer>
    <experiments>3</experiments>
</comment>
<comment type="subcellular location">
    <subcellularLocation>
        <location evidence="4">Cytoplasm</location>
        <location evidence="4">Cytosol</location>
    </subcellularLocation>
    <subcellularLocation>
        <location evidence="1">Synapse</location>
    </subcellularLocation>
    <text evidence="1">Enriched at synaptic sites in mature neurons where it colocalizes with SHANK1.</text>
</comment>
<comment type="alternative products">
    <event type="alternative splicing"/>
    <isoform>
        <id>Q9H0F6-1</id>
        <name>1</name>
        <sequence type="displayed"/>
    </isoform>
    <isoform>
        <id>Q9H0F6-2</id>
        <name>2</name>
        <name>hSIPL1A</name>
        <sequence type="described" ref="VSP_023837 VSP_023838"/>
    </isoform>
</comment>
<comment type="tissue specificity">
    <text evidence="4">Highly expressed in skeletal muscle and placenta and at lower levels in brain, heart, colon without mucosa, thymus, spleen, kidney, liver, small intestine, lung and peripheral blood leukocytes. Up-regulated in various tumor tissues such as kidney, liver, ovary and pancreas tumors.</text>
</comment>
<comment type="domain">
    <text evidence="7">The Ubiquitin-like domain is required for the interaction with RNF31.</text>
</comment>
<comment type="domain">
    <text evidence="7">The RanBP2-type zinc fingers mediate the specific interaction with ubiquitin. Binds preferentially linear polyubiquitin chains and 'Lys-63'-linked polyubiquitin chains over 'Lys-48'-linked polyubiquitin chains. Also binds monoubiquitin.</text>
</comment>
<comment type="disease" evidence="11">
    <disease id="DI-06889">
        <name>Autoinflammation with episodic fever and immune dysregulation</name>
        <acronym>AIFID</acronym>
        <description>An autosomal recessive disorder characterized by recurrent fever and autoinflammation with onset in infancy or early childhood. Variable clinical manifestations include lymphadenopathy, hepatosplenomegaly, gastrointestinal inflammation, polyarthritis and joint inflammation, parotitis, and immune dysregulation.</description>
        <dbReference type="MIM" id="620795"/>
    </disease>
    <text>The disease is caused by variants affecting the gene represented in this entry.</text>
</comment>
<comment type="sequence caution" evidence="15">
    <conflict type="frameshift">
        <sequence resource="EMBL-CDS" id="BAC11666"/>
    </conflict>
</comment>
<comment type="sequence caution" evidence="15">
    <conflict type="frameshift">
        <sequence resource="EMBL-CDS" id="BAC53797"/>
    </conflict>
</comment>
<comment type="sequence caution" evidence="15">
    <conflict type="miscellaneous discrepancy">
        <sequence resource="EMBL-CDS" id="BAC53798"/>
    </conflict>
    <text>Aberrant splicing.</text>
</comment>
<reference key="1">
    <citation type="journal article" date="2003" name="J. Gastroenterol. Hepatol.">
        <title>Novel human and mouse genes encoding a shank-interacting protein and its upregulation in gastric fundus of W/WV mouse.</title>
        <authorList>
            <person name="Daigo Y."/>
            <person name="Takayama I."/>
            <person name="Ward S.M."/>
            <person name="Sanders K.M."/>
            <person name="Fujino M.A."/>
        </authorList>
    </citation>
    <scope>NUCLEOTIDE SEQUENCE [MRNA] (ISOFORM 2)</scope>
</reference>
<reference key="2">
    <citation type="journal article" date="2010" name="Mol. Cell. Biochem.">
        <title>Newly identified tumor-associated role of human Sharpin.</title>
        <authorList>
            <person name="Jung J."/>
            <person name="Kim J.M."/>
            <person name="Park B."/>
            <person name="Cheon Y."/>
            <person name="Lee B."/>
            <person name="Choo S.H."/>
            <person name="Koh S.S."/>
            <person name="Lee S.J."/>
        </authorList>
    </citation>
    <scope>NUCLEOTIDE SEQUENCE [MRNA] (ISOFORM 1)</scope>
    <scope>SUBCELLULAR LOCATION</scope>
    <scope>TISSUE SPECIFICITY</scope>
</reference>
<reference key="3">
    <citation type="journal article" date="2001" name="Genome Res.">
        <title>Towards a catalog of human genes and proteins: sequencing and analysis of 500 novel complete protein coding human cDNAs.</title>
        <authorList>
            <person name="Wiemann S."/>
            <person name="Weil B."/>
            <person name="Wellenreuther R."/>
            <person name="Gassenhuber J."/>
            <person name="Glassl S."/>
            <person name="Ansorge W."/>
            <person name="Boecher M."/>
            <person name="Bloecker H."/>
            <person name="Bauersachs S."/>
            <person name="Blum H."/>
            <person name="Lauber J."/>
            <person name="Duesterhoeft A."/>
            <person name="Beyer A."/>
            <person name="Koehrer K."/>
            <person name="Strack N."/>
            <person name="Mewes H.-W."/>
            <person name="Ottenwaelder B."/>
            <person name="Obermaier B."/>
            <person name="Tampe J."/>
            <person name="Heubner D."/>
            <person name="Wambutt R."/>
            <person name="Korn B."/>
            <person name="Klein M."/>
            <person name="Poustka A."/>
        </authorList>
    </citation>
    <scope>NUCLEOTIDE SEQUENCE [LARGE SCALE MRNA] (ISOFORM 1)</scope>
    <source>
        <tissue>Testis</tissue>
    </source>
</reference>
<reference key="4">
    <citation type="journal article" date="2004" name="Nat. Genet.">
        <title>Complete sequencing and characterization of 21,243 full-length human cDNAs.</title>
        <authorList>
            <person name="Ota T."/>
            <person name="Suzuki Y."/>
            <person name="Nishikawa T."/>
            <person name="Otsuki T."/>
            <person name="Sugiyama T."/>
            <person name="Irie R."/>
            <person name="Wakamatsu A."/>
            <person name="Hayashi K."/>
            <person name="Sato H."/>
            <person name="Nagai K."/>
            <person name="Kimura K."/>
            <person name="Makita H."/>
            <person name="Sekine M."/>
            <person name="Obayashi M."/>
            <person name="Nishi T."/>
            <person name="Shibahara T."/>
            <person name="Tanaka T."/>
            <person name="Ishii S."/>
            <person name="Yamamoto J."/>
            <person name="Saito K."/>
            <person name="Kawai Y."/>
            <person name="Isono Y."/>
            <person name="Nakamura Y."/>
            <person name="Nagahari K."/>
            <person name="Murakami K."/>
            <person name="Yasuda T."/>
            <person name="Iwayanagi T."/>
            <person name="Wagatsuma M."/>
            <person name="Shiratori A."/>
            <person name="Sudo H."/>
            <person name="Hosoiri T."/>
            <person name="Kaku Y."/>
            <person name="Kodaira H."/>
            <person name="Kondo H."/>
            <person name="Sugawara M."/>
            <person name="Takahashi M."/>
            <person name="Kanda K."/>
            <person name="Yokoi T."/>
            <person name="Furuya T."/>
            <person name="Kikkawa E."/>
            <person name="Omura Y."/>
            <person name="Abe K."/>
            <person name="Kamihara K."/>
            <person name="Katsuta N."/>
            <person name="Sato K."/>
            <person name="Tanikawa M."/>
            <person name="Yamazaki M."/>
            <person name="Ninomiya K."/>
            <person name="Ishibashi T."/>
            <person name="Yamashita H."/>
            <person name="Murakawa K."/>
            <person name="Fujimori K."/>
            <person name="Tanai H."/>
            <person name="Kimata M."/>
            <person name="Watanabe M."/>
            <person name="Hiraoka S."/>
            <person name="Chiba Y."/>
            <person name="Ishida S."/>
            <person name="Ono Y."/>
            <person name="Takiguchi S."/>
            <person name="Watanabe S."/>
            <person name="Yosida M."/>
            <person name="Hotuta T."/>
            <person name="Kusano J."/>
            <person name="Kanehori K."/>
            <person name="Takahashi-Fujii A."/>
            <person name="Hara H."/>
            <person name="Tanase T.-O."/>
            <person name="Nomura Y."/>
            <person name="Togiya S."/>
            <person name="Komai F."/>
            <person name="Hara R."/>
            <person name="Takeuchi K."/>
            <person name="Arita M."/>
            <person name="Imose N."/>
            <person name="Musashino K."/>
            <person name="Yuuki H."/>
            <person name="Oshima A."/>
            <person name="Sasaki N."/>
            <person name="Aotsuka S."/>
            <person name="Yoshikawa Y."/>
            <person name="Matsunawa H."/>
            <person name="Ichihara T."/>
            <person name="Shiohata N."/>
            <person name="Sano S."/>
            <person name="Moriya S."/>
            <person name="Momiyama H."/>
            <person name="Satoh N."/>
            <person name="Takami S."/>
            <person name="Terashima Y."/>
            <person name="Suzuki O."/>
            <person name="Nakagawa S."/>
            <person name="Senoh A."/>
            <person name="Mizoguchi H."/>
            <person name="Goto Y."/>
            <person name="Shimizu F."/>
            <person name="Wakebe H."/>
            <person name="Hishigaki H."/>
            <person name="Watanabe T."/>
            <person name="Sugiyama A."/>
            <person name="Takemoto M."/>
            <person name="Kawakami B."/>
            <person name="Yamazaki M."/>
            <person name="Watanabe K."/>
            <person name="Kumagai A."/>
            <person name="Itakura S."/>
            <person name="Fukuzumi Y."/>
            <person name="Fujimori Y."/>
            <person name="Komiyama M."/>
            <person name="Tashiro H."/>
            <person name="Tanigami A."/>
            <person name="Fujiwara T."/>
            <person name="Ono T."/>
            <person name="Yamada K."/>
            <person name="Fujii Y."/>
            <person name="Ozaki K."/>
            <person name="Hirao M."/>
            <person name="Ohmori Y."/>
            <person name="Kawabata A."/>
            <person name="Hikiji T."/>
            <person name="Kobatake N."/>
            <person name="Inagaki H."/>
            <person name="Ikema Y."/>
            <person name="Okamoto S."/>
            <person name="Okitani R."/>
            <person name="Kawakami T."/>
            <person name="Noguchi S."/>
            <person name="Itoh T."/>
            <person name="Shigeta K."/>
            <person name="Senba T."/>
            <person name="Matsumura K."/>
            <person name="Nakajima Y."/>
            <person name="Mizuno T."/>
            <person name="Morinaga M."/>
            <person name="Sasaki M."/>
            <person name="Togashi T."/>
            <person name="Oyama M."/>
            <person name="Hata H."/>
            <person name="Watanabe M."/>
            <person name="Komatsu T."/>
            <person name="Mizushima-Sugano J."/>
            <person name="Satoh T."/>
            <person name="Shirai Y."/>
            <person name="Takahashi Y."/>
            <person name="Nakagawa K."/>
            <person name="Okumura K."/>
            <person name="Nagase T."/>
            <person name="Nomura N."/>
            <person name="Kikuchi H."/>
            <person name="Masuho Y."/>
            <person name="Yamashita R."/>
            <person name="Nakai K."/>
            <person name="Yada T."/>
            <person name="Nakamura Y."/>
            <person name="Ohara O."/>
            <person name="Isogai T."/>
            <person name="Sugano S."/>
        </authorList>
    </citation>
    <scope>NUCLEOTIDE SEQUENCE [LARGE SCALE MRNA] (ISOFORM 1)</scope>
    <source>
        <tissue>Embryo</tissue>
    </source>
</reference>
<reference key="5">
    <citation type="journal article" date="2006" name="Nature">
        <title>DNA sequence and analysis of human chromosome 8.</title>
        <authorList>
            <person name="Nusbaum C."/>
            <person name="Mikkelsen T.S."/>
            <person name="Zody M.C."/>
            <person name="Asakawa S."/>
            <person name="Taudien S."/>
            <person name="Garber M."/>
            <person name="Kodira C.D."/>
            <person name="Schueler M.G."/>
            <person name="Shimizu A."/>
            <person name="Whittaker C.A."/>
            <person name="Chang J.L."/>
            <person name="Cuomo C.A."/>
            <person name="Dewar K."/>
            <person name="FitzGerald M.G."/>
            <person name="Yang X."/>
            <person name="Allen N.R."/>
            <person name="Anderson S."/>
            <person name="Asakawa T."/>
            <person name="Blechschmidt K."/>
            <person name="Bloom T."/>
            <person name="Borowsky M.L."/>
            <person name="Butler J."/>
            <person name="Cook A."/>
            <person name="Corum B."/>
            <person name="DeArellano K."/>
            <person name="DeCaprio D."/>
            <person name="Dooley K.T."/>
            <person name="Dorris L. III"/>
            <person name="Engels R."/>
            <person name="Gloeckner G."/>
            <person name="Hafez N."/>
            <person name="Hagopian D.S."/>
            <person name="Hall J.L."/>
            <person name="Ishikawa S.K."/>
            <person name="Jaffe D.B."/>
            <person name="Kamat A."/>
            <person name="Kudoh J."/>
            <person name="Lehmann R."/>
            <person name="Lokitsang T."/>
            <person name="Macdonald P."/>
            <person name="Major J.E."/>
            <person name="Matthews C.D."/>
            <person name="Mauceli E."/>
            <person name="Menzel U."/>
            <person name="Mihalev A.H."/>
            <person name="Minoshima S."/>
            <person name="Murayama Y."/>
            <person name="Naylor J.W."/>
            <person name="Nicol R."/>
            <person name="Nguyen C."/>
            <person name="O'Leary S.B."/>
            <person name="O'Neill K."/>
            <person name="Parker S.C.J."/>
            <person name="Polley A."/>
            <person name="Raymond C.K."/>
            <person name="Reichwald K."/>
            <person name="Rodriguez J."/>
            <person name="Sasaki T."/>
            <person name="Schilhabel M."/>
            <person name="Siddiqui R."/>
            <person name="Smith C.L."/>
            <person name="Sneddon T.P."/>
            <person name="Talamas J.A."/>
            <person name="Tenzin P."/>
            <person name="Topham K."/>
            <person name="Venkataraman V."/>
            <person name="Wen G."/>
            <person name="Yamazaki S."/>
            <person name="Young S.K."/>
            <person name="Zeng Q."/>
            <person name="Zimmer A.R."/>
            <person name="Rosenthal A."/>
            <person name="Birren B.W."/>
            <person name="Platzer M."/>
            <person name="Shimizu N."/>
            <person name="Lander E.S."/>
        </authorList>
    </citation>
    <scope>NUCLEOTIDE SEQUENCE [LARGE SCALE GENOMIC DNA]</scope>
</reference>
<reference key="6">
    <citation type="submission" date="2005-09" db="EMBL/GenBank/DDBJ databases">
        <authorList>
            <person name="Mural R.J."/>
            <person name="Istrail S."/>
            <person name="Sutton G.G."/>
            <person name="Florea L."/>
            <person name="Halpern A.L."/>
            <person name="Mobarry C.M."/>
            <person name="Lippert R."/>
            <person name="Walenz B."/>
            <person name="Shatkay H."/>
            <person name="Dew I."/>
            <person name="Miller J.R."/>
            <person name="Flanigan M.J."/>
            <person name="Edwards N.J."/>
            <person name="Bolanos R."/>
            <person name="Fasulo D."/>
            <person name="Halldorsson B.V."/>
            <person name="Hannenhalli S."/>
            <person name="Turner R."/>
            <person name="Yooseph S."/>
            <person name="Lu F."/>
            <person name="Nusskern D.R."/>
            <person name="Shue B.C."/>
            <person name="Zheng X.H."/>
            <person name="Zhong F."/>
            <person name="Delcher A.L."/>
            <person name="Huson D.H."/>
            <person name="Kravitz S.A."/>
            <person name="Mouchard L."/>
            <person name="Reinert K."/>
            <person name="Remington K.A."/>
            <person name="Clark A.G."/>
            <person name="Waterman M.S."/>
            <person name="Eichler E.E."/>
            <person name="Adams M.D."/>
            <person name="Hunkapiller M.W."/>
            <person name="Myers E.W."/>
            <person name="Venter J.C."/>
        </authorList>
    </citation>
    <scope>NUCLEOTIDE SEQUENCE [LARGE SCALE GENOMIC DNA]</scope>
</reference>
<reference key="7">
    <citation type="journal article" date="2004" name="Genome Res.">
        <title>The status, quality, and expansion of the NIH full-length cDNA project: the Mammalian Gene Collection (MGC).</title>
        <authorList>
            <consortium name="The MGC Project Team"/>
        </authorList>
    </citation>
    <scope>NUCLEOTIDE SEQUENCE [LARGE SCALE MRNA] (ISOFORMS 1 AND 2)</scope>
    <source>
        <tissue>Pancreas</tissue>
        <tissue>Prostate</tissue>
        <tissue>Uterus</tissue>
    </source>
</reference>
<reference key="8">
    <citation type="journal article" date="2008" name="Proc. Natl. Acad. Sci. U.S.A.">
        <title>A quantitative atlas of mitotic phosphorylation.</title>
        <authorList>
            <person name="Dephoure N."/>
            <person name="Zhou C."/>
            <person name="Villen J."/>
            <person name="Beausoleil S.A."/>
            <person name="Bakalarski C.E."/>
            <person name="Elledge S.J."/>
            <person name="Gygi S.P."/>
        </authorList>
    </citation>
    <scope>PHOSPHORYLATION [LARGE SCALE ANALYSIS] AT SER-165</scope>
    <scope>IDENTIFICATION BY MASS SPECTROMETRY [LARGE SCALE ANALYSIS]</scope>
    <source>
        <tissue>Cervix carcinoma</tissue>
    </source>
</reference>
<reference key="9">
    <citation type="journal article" date="2010" name="Sci. Signal.">
        <title>Quantitative phosphoproteomics reveals widespread full phosphorylation site occupancy during mitosis.</title>
        <authorList>
            <person name="Olsen J.V."/>
            <person name="Vermeulen M."/>
            <person name="Santamaria A."/>
            <person name="Kumar C."/>
            <person name="Miller M.L."/>
            <person name="Jensen L.J."/>
            <person name="Gnad F."/>
            <person name="Cox J."/>
            <person name="Jensen T.S."/>
            <person name="Nigg E.A."/>
            <person name="Brunak S."/>
            <person name="Mann M."/>
        </authorList>
    </citation>
    <scope>PHOSPHORYLATION [LARGE SCALE ANALYSIS] AT SER-312</scope>
    <scope>IDENTIFICATION BY MASS SPECTROMETRY [LARGE SCALE ANALYSIS]</scope>
    <source>
        <tissue>Cervix carcinoma</tissue>
    </source>
</reference>
<reference key="10">
    <citation type="journal article" date="2011" name="Nature">
        <title>Linear ubiquitination prevents inflammation and regulates immune signalling.</title>
        <authorList>
            <person name="Gerlach B."/>
            <person name="Cordier S.M."/>
            <person name="Schmukle A.C."/>
            <person name="Emmerich C.H."/>
            <person name="Rieser E."/>
            <person name="Haas T.L."/>
            <person name="Webb A.I."/>
            <person name="Rickard J.A."/>
            <person name="Anderton H."/>
            <person name="Wong W.W."/>
            <person name="Nachbur U."/>
            <person name="Gangoda L."/>
            <person name="Warnken U."/>
            <person name="Purcell A.W."/>
            <person name="Silke J."/>
            <person name="Walczak H."/>
        </authorList>
    </citation>
    <scope>IDENTIFICATION BY MASS SPECTROMETRY</scope>
    <scope>IDENTIFICATION IN THE LUBAC COMPLEX</scope>
    <scope>FUNCTION</scope>
    <scope>DOMAIN RANBP2-TYPE</scope>
    <scope>DOMAIN UBIQUITIN-LIKE</scope>
    <scope>UBIQUITIN-BINDING</scope>
    <scope>MUTAGENESIS OF CYS-354; CYS-357; CYS-368 AND CYS-371</scope>
</reference>
<reference key="11">
    <citation type="journal article" date="2011" name="Nature">
        <title>SHARPIN is a component of the NF-kappaB-activating linear ubiquitin chain assembly complex.</title>
        <authorList>
            <person name="Tokunaga F."/>
            <person name="Nakagawa T."/>
            <person name="Nakahara M."/>
            <person name="Saeki Y."/>
            <person name="Taniguchi M."/>
            <person name="Sakata S."/>
            <person name="Tanaka K."/>
            <person name="Nakano H."/>
            <person name="Iwai K."/>
        </authorList>
    </citation>
    <scope>IDENTIFICATION IN THE LUBAC COMPLEX</scope>
    <scope>FUNCTION</scope>
    <scope>DOMAIN UBIQUITIN-LIKE</scope>
</reference>
<reference key="12">
    <citation type="journal article" date="2011" name="Nature">
        <title>SHARPIN forms a linear ubiquitin ligase complex regulating NF-kappaB activity and apoptosis.</title>
        <authorList>
            <person name="Ikeda F."/>
            <person name="Deribe Y.L."/>
            <person name="Skanland S.S."/>
            <person name="Stieglitz B."/>
            <person name="Grabbe C."/>
            <person name="Franz-Wachtel M."/>
            <person name="van Wijk S.J."/>
            <person name="Goswami P."/>
            <person name="Nagy V."/>
            <person name="Terzic J."/>
            <person name="Tokunaga F."/>
            <person name="Androulidaki A."/>
            <person name="Nakagawa T."/>
            <person name="Pasparakis M."/>
            <person name="Iwai K."/>
            <person name="Sundberg J.P."/>
            <person name="Schaefer L."/>
            <person name="Rittinger K."/>
            <person name="Macek B."/>
            <person name="Dikic I."/>
        </authorList>
    </citation>
    <scope>IDENTIFICATION IN THE LUBAC COMPLEX</scope>
    <scope>FUNCTION</scope>
    <scope>DOMAIN RANBP2-TYPE</scope>
    <scope>DOMAIN UBIQUITIN-LIKE</scope>
    <scope>UBIQUITIN-BINDING</scope>
    <scope>MUTAGENESIS OF ILE-272 AND 358-THR-PHE-359</scope>
</reference>
<reference key="13">
    <citation type="journal article" date="2013" name="J. Proteome Res.">
        <title>Toward a comprehensive characterization of a human cancer cell phosphoproteome.</title>
        <authorList>
            <person name="Zhou H."/>
            <person name="Di Palma S."/>
            <person name="Preisinger C."/>
            <person name="Peng M."/>
            <person name="Polat A.N."/>
            <person name="Heck A.J."/>
            <person name="Mohammed S."/>
        </authorList>
    </citation>
    <scope>PHOSPHORYLATION [LARGE SCALE ANALYSIS] AT SER-165 AND SER-312</scope>
    <scope>IDENTIFICATION BY MASS SPECTROMETRY [LARGE SCALE ANALYSIS]</scope>
    <source>
        <tissue>Cervix carcinoma</tissue>
        <tissue>Erythroleukemia</tissue>
    </source>
</reference>
<reference key="14">
    <citation type="journal article" date="2012" name="J. Biol. Chem.">
        <title>Structural analysis of SHARPIN, a subunit of a large multi-protein E3 ubiquitin ligase, reveals a novel dimerization function for the pleckstrin homology superfold.</title>
        <authorList>
            <person name="Stieglitz B."/>
            <person name="Haire L.F."/>
            <person name="Dikic I."/>
            <person name="Rittinger K."/>
        </authorList>
    </citation>
    <scope>X-RAY CRYSTALLOGRAPHY (2.0 ANGSTROMS) OF 1-127</scope>
    <scope>MUTAGENESIS OF VAL-114</scope>
    <scope>SUBUNIT</scope>
</reference>
<reference key="15">
    <citation type="journal article" date="2013" name="Nature">
        <title>The linear ubiquitin-specific deubiquitinase gumby regulates angiogenesis.</title>
        <authorList>
            <person name="Rivkin E."/>
            <person name="Almeida S.M."/>
            <person name="Ceccarelli D.F."/>
            <person name="Juang Y.C."/>
            <person name="Maclean T.A."/>
            <person name="Srikumar T."/>
            <person name="Huang H."/>
            <person name="Dunham W.H."/>
            <person name="Fukumura R."/>
            <person name="Xie G."/>
            <person name="Gondo Y."/>
            <person name="Raught B."/>
            <person name="Gingras A.C."/>
            <person name="Sicheri F."/>
            <person name="Cordes S.P."/>
        </authorList>
    </citation>
    <scope>FUNCTION</scope>
</reference>
<reference key="16">
    <citation type="journal article" date="2017" name="Nat. Microbiol.">
        <title>LUBAC-synthesized linear ubiquitin chains restrict cytosol-invading bacteria by activating autophagy and NF-kappaB.</title>
        <authorList>
            <person name="Noad J."/>
            <person name="von der Malsburg A."/>
            <person name="Pathe C."/>
            <person name="Michel M.A."/>
            <person name="Komander D."/>
            <person name="Randow F."/>
        </authorList>
    </citation>
    <scope>FUNCTION</scope>
    <scope>IDENTIFICATION IN THE LUBAC COMPLEX</scope>
    <scope>PATHWAY</scope>
</reference>
<reference key="17">
    <citation type="journal article" date="2024" name="Nat. Immunol.">
        <title>Biallelic human SHARPIN loss of function induces autoinflammation and immunodeficiency.</title>
        <authorList>
            <person name="Oda H."/>
            <person name="Manthiram K."/>
            <person name="Chavan P.P."/>
            <person name="Rieser E."/>
            <person name="Veli O."/>
            <person name="Kaya O."/>
            <person name="Rauch C."/>
            <person name="Nakabo S."/>
            <person name="Kuehn H.S."/>
            <person name="Swart M."/>
            <person name="Wang Y."/>
            <person name="Celik N.I."/>
            <person name="Molitor A."/>
            <person name="Ziaee V."/>
            <person name="Movahedi N."/>
            <person name="Shahrooei M."/>
            <person name="Parvaneh N."/>
            <person name="Alipour-Olyei N."/>
            <person name="Carapito R."/>
            <person name="Xu Q."/>
            <person name="Preite S."/>
            <person name="Beck D.B."/>
            <person name="Chae J.J."/>
            <person name="Nehrebecky M."/>
            <person name="Ombrello A.K."/>
            <person name="Hoffmann P."/>
            <person name="Romeo T."/>
            <person name="Deuitch N.T."/>
            <person name="Matthiasardottir B."/>
            <person name="Mullikin J."/>
            <person name="Komarow H."/>
            <person name="Stoddard J."/>
            <person name="Niemela J."/>
            <person name="Dobbs K."/>
            <person name="Sweeney C.L."/>
            <person name="Anderton H."/>
            <person name="Lawlor K.E."/>
            <person name="Yoshitomi H."/>
            <person name="Yang D."/>
            <person name="Boehm M."/>
            <person name="Davis J."/>
            <person name="Mudd P."/>
            <person name="Randazzo D."/>
            <person name="Tsai W.L."/>
            <person name="Gadina M."/>
            <person name="Kaplan M.J."/>
            <person name="Toguchida J."/>
            <person name="Mayer C.T."/>
            <person name="Rosenzweig S.D."/>
            <person name="Notarangelo L.D."/>
            <person name="Iwai K."/>
            <person name="Silke J."/>
            <person name="Schwartzberg P.L."/>
            <person name="Boisson B."/>
            <person name="Casanova J.L."/>
            <person name="Bahram S."/>
            <person name="Rao A.P."/>
            <person name="Peltzer N."/>
            <person name="Walczak H."/>
            <person name="Lalaoui N."/>
            <person name="Aksentijevich I."/>
            <person name="Kastner D.L."/>
        </authorList>
    </citation>
    <scope>INVOLVEMENT IN AIFID</scope>
</reference>
<accession>Q9H0F6</accession>
<accession>A6NEG3</accession>
<accession>C0L3L2</accession>
<accession>D3DWL3</accession>
<accession>Q8IXF5</accession>
<accession>Q8IXF6</accession>
<accession>Q8N2E7</accession>
<accession>Q8TB25</accession>
<accession>Q9BUE4</accession>
<name>SHRPN_HUMAN</name>
<protein>
    <recommendedName>
        <fullName evidence="14">Sharpin</fullName>
    </recommendedName>
    <alternativeName>
        <fullName>Shank-associated RH domain-interacting protein</fullName>
    </alternativeName>
    <alternativeName>
        <fullName>Shank-interacting protein-like 1</fullName>
        <shortName>hSIPL1</shortName>
    </alternativeName>
</protein>
<organism>
    <name type="scientific">Homo sapiens</name>
    <name type="common">Human</name>
    <dbReference type="NCBI Taxonomy" id="9606"/>
    <lineage>
        <taxon>Eukaryota</taxon>
        <taxon>Metazoa</taxon>
        <taxon>Chordata</taxon>
        <taxon>Craniata</taxon>
        <taxon>Vertebrata</taxon>
        <taxon>Euteleostomi</taxon>
        <taxon>Mammalia</taxon>
        <taxon>Eutheria</taxon>
        <taxon>Euarchontoglires</taxon>
        <taxon>Primates</taxon>
        <taxon>Haplorrhini</taxon>
        <taxon>Catarrhini</taxon>
        <taxon>Hominidae</taxon>
        <taxon>Homo</taxon>
    </lineage>
</organism>
<sequence length="387" mass="39949">MAPPAGGAAAAASDLGSAAVLLAVHAAVRPLGAGPDAEAQLRRLQLSADPERPGRFRLELLGAGPGAVNLEWPLESVSYTIRGPTQHELQPPPGGPGTLSLHFLNPQEAQRWAVLVRGATVEGQNGSKSNSPPALGPEACPVSLPSPPEASTLKGPPPEADLPRSPGNLTEREELAGSLARAIAGGDEKGAAQVAAVLAQHRVALSVQLQEACFPPGPIRLQVTLEDAASAASAASSAHVALQVHPHCTVAALQEQVFSELGFPPAVQRWVIGRCLCVPERSLASYGVRQDGDPAFLYLLSAPREAPATGPSPQHPQKMDGELGRLFPPSLGLPPGPQPAASSLPSPLQPSWSCPSCTFINAPDRPGCEMCSTQRPCTWDPLAAAST</sequence>
<gene>
    <name evidence="14" type="primary">SHARPIN</name>
    <name type="synonym">SIPL1</name>
    <name type="ORF">PSEC0216</name>
</gene>